<accession>A4WR96</accession>
<sequence length="522" mass="57266">MKLTLWTYEGPPHVGAMRVATGMTGLHYVLHAPQGDTYADLLFTMIERRGKRPPVSYTTFQARDLGSDTAEVFQQACRDAYERFQPQAIMVGASCTAELIQDDTGGLADALSLPVPVVHLELPSYQRKENFGADESFLQICRKLAKPTERTAQVSCNILGPTALGFRHRDDVTEITQLLNAMGIAVNVVAPMGSSPADIARLGAAHFNVLLYPETAESAARWAEKTLKQPYTKVVPIGVGATRDFIAEVAKLAGVEPKADESRLRQPWWSASVDSTYLTGKRVFLFGDATHVIAAARIARDEVGFEVVGMGCYNREYARPLRAAAKDYGLEALITDDYLEVEEAIQALAPELILGTQMERHIAKRLGIPCAVISAPVHVQDFPARYSPQMGFEGANVIFDTWIHPLTMGLEEHLLTMFREDFEFHDEAGPSHHGGKAVPASAPRAEATADEGSTPEEAVPPVAAEATSGEIVWLSDAEKELKKIPFFVRGKARRNTEKFAAEKGLTRISIETLYEAKAHYAR</sequence>
<evidence type="ECO:0000255" key="1">
    <source>
        <dbReference type="HAMAP-Rule" id="MF_00353"/>
    </source>
</evidence>
<evidence type="ECO:0000256" key="2">
    <source>
        <dbReference type="SAM" id="MobiDB-lite"/>
    </source>
</evidence>
<gene>
    <name evidence="1" type="primary">bchB</name>
    <name type="ordered locus">Rsph17025_1009</name>
</gene>
<reference key="1">
    <citation type="submission" date="2007-04" db="EMBL/GenBank/DDBJ databases">
        <title>Complete sequence of chromosome of Rhodobacter sphaeroides ATCC 17025.</title>
        <authorList>
            <consortium name="US DOE Joint Genome Institute"/>
            <person name="Copeland A."/>
            <person name="Lucas S."/>
            <person name="Lapidus A."/>
            <person name="Barry K."/>
            <person name="Detter J.C."/>
            <person name="Glavina del Rio T."/>
            <person name="Hammon N."/>
            <person name="Israni S."/>
            <person name="Dalin E."/>
            <person name="Tice H."/>
            <person name="Pitluck S."/>
            <person name="Chertkov O."/>
            <person name="Brettin T."/>
            <person name="Bruce D."/>
            <person name="Han C."/>
            <person name="Schmutz J."/>
            <person name="Larimer F."/>
            <person name="Land M."/>
            <person name="Hauser L."/>
            <person name="Kyrpides N."/>
            <person name="Kim E."/>
            <person name="Richardson P."/>
            <person name="Mackenzie C."/>
            <person name="Choudhary M."/>
            <person name="Donohue T.J."/>
            <person name="Kaplan S."/>
        </authorList>
    </citation>
    <scope>NUCLEOTIDE SEQUENCE [LARGE SCALE GENOMIC DNA]</scope>
    <source>
        <strain>ATCC 17025 / ATH 2.4.3</strain>
    </source>
</reference>
<name>BCHB_CERS5</name>
<protein>
    <recommendedName>
        <fullName evidence="1">Light-independent protochlorophyllide reductase subunit B</fullName>
        <shortName evidence="1">DPOR subunit B</shortName>
        <shortName evidence="1">LI-POR subunit B</shortName>
        <ecNumber evidence="1">1.3.7.7</ecNumber>
    </recommendedName>
</protein>
<keyword id="KW-0004">4Fe-4S</keyword>
<keyword id="KW-0067">ATP-binding</keyword>
<keyword id="KW-0077">Bacteriochlorophyll biosynthesis</keyword>
<keyword id="KW-0149">Chlorophyll biosynthesis</keyword>
<keyword id="KW-0408">Iron</keyword>
<keyword id="KW-0411">Iron-sulfur</keyword>
<keyword id="KW-0479">Metal-binding</keyword>
<keyword id="KW-0547">Nucleotide-binding</keyword>
<keyword id="KW-0560">Oxidoreductase</keyword>
<keyword id="KW-0602">Photosynthesis</keyword>
<comment type="function">
    <text evidence="1">Component of the dark-operative protochlorophyllide reductase (DPOR) that uses Mg-ATP and reduced ferredoxin to reduce ring D of protochlorophyllide (Pchlide) to form chlorophyllide a (Chlide). This reaction is light-independent. The NB-protein (BchN-BchB) is the catalytic component of the complex.</text>
</comment>
<comment type="catalytic activity">
    <reaction evidence="1">
        <text>chlorophyllide a + oxidized 2[4Fe-4S]-[ferredoxin] + 2 ADP + 2 phosphate = protochlorophyllide a + reduced 2[4Fe-4S]-[ferredoxin] + 2 ATP + 2 H2O</text>
        <dbReference type="Rhea" id="RHEA:28202"/>
        <dbReference type="Rhea" id="RHEA-COMP:10002"/>
        <dbReference type="Rhea" id="RHEA-COMP:10004"/>
        <dbReference type="ChEBI" id="CHEBI:15377"/>
        <dbReference type="ChEBI" id="CHEBI:30616"/>
        <dbReference type="ChEBI" id="CHEBI:33722"/>
        <dbReference type="ChEBI" id="CHEBI:33723"/>
        <dbReference type="ChEBI" id="CHEBI:43474"/>
        <dbReference type="ChEBI" id="CHEBI:83348"/>
        <dbReference type="ChEBI" id="CHEBI:83350"/>
        <dbReference type="ChEBI" id="CHEBI:456216"/>
        <dbReference type="EC" id="1.3.7.7"/>
    </reaction>
</comment>
<comment type="cofactor">
    <cofactor evidence="1">
        <name>[4Fe-4S] cluster</name>
        <dbReference type="ChEBI" id="CHEBI:49883"/>
    </cofactor>
    <text evidence="1">Binds 1 [4Fe-4S] cluster per heterodimer. The cluster is bound at the heterodimer interface by residues from both subunits.</text>
</comment>
<comment type="pathway">
    <text evidence="1">Porphyrin-containing compound metabolism; bacteriochlorophyll biosynthesis (light-independent).</text>
</comment>
<comment type="subunit">
    <text evidence="1">Protochlorophyllide reductase is composed of three subunits; BchL, BchN and BchB. Forms a heterotetramer of two BchB and two BchN subunits.</text>
</comment>
<comment type="similarity">
    <text evidence="1">Belongs to the ChlB/BchB/BchZ family.</text>
</comment>
<proteinExistence type="inferred from homology"/>
<organism>
    <name type="scientific">Cereibacter sphaeroides (strain ATCC 17025 / ATH 2.4.3)</name>
    <name type="common">Rhodobacter sphaeroides</name>
    <dbReference type="NCBI Taxonomy" id="349102"/>
    <lineage>
        <taxon>Bacteria</taxon>
        <taxon>Pseudomonadati</taxon>
        <taxon>Pseudomonadota</taxon>
        <taxon>Alphaproteobacteria</taxon>
        <taxon>Rhodobacterales</taxon>
        <taxon>Paracoccaceae</taxon>
        <taxon>Cereibacter</taxon>
    </lineage>
</organism>
<feature type="chain" id="PRO_1000048422" description="Light-independent protochlorophyllide reductase subunit B">
    <location>
        <begin position="1"/>
        <end position="522"/>
    </location>
</feature>
<feature type="region of interest" description="Disordered" evidence="2">
    <location>
        <begin position="426"/>
        <end position="464"/>
    </location>
</feature>
<feature type="compositionally biased region" description="Low complexity" evidence="2">
    <location>
        <begin position="455"/>
        <end position="464"/>
    </location>
</feature>
<feature type="active site" description="Proton donor" evidence="1">
    <location>
        <position position="274"/>
    </location>
</feature>
<feature type="binding site" evidence="1">
    <location>
        <position position="36"/>
    </location>
    <ligand>
        <name>[4Fe-4S] cluster</name>
        <dbReference type="ChEBI" id="CHEBI:49883"/>
        <note>ligand shared with heterodimeric partner</note>
    </ligand>
</feature>
<feature type="binding site" evidence="1">
    <location>
        <begin position="409"/>
        <end position="410"/>
    </location>
    <ligand>
        <name>substrate</name>
    </ligand>
</feature>
<dbReference type="EC" id="1.3.7.7" evidence="1"/>
<dbReference type="EMBL" id="CP000661">
    <property type="protein sequence ID" value="ABP69910.1"/>
    <property type="molecule type" value="Genomic_DNA"/>
</dbReference>
<dbReference type="SMR" id="A4WR96"/>
<dbReference type="STRING" id="349102.Rsph17025_1009"/>
<dbReference type="KEGG" id="rsq:Rsph17025_1009"/>
<dbReference type="eggNOG" id="COG2710">
    <property type="taxonomic scope" value="Bacteria"/>
</dbReference>
<dbReference type="HOGENOM" id="CLU_025470_0_0_5"/>
<dbReference type="BioCyc" id="RSPH349102:G1G8M-1035-MONOMER"/>
<dbReference type="UniPathway" id="UPA00671"/>
<dbReference type="GO" id="GO:0051539">
    <property type="term" value="F:4 iron, 4 sulfur cluster binding"/>
    <property type="evidence" value="ECO:0007669"/>
    <property type="project" value="UniProtKB-UniRule"/>
</dbReference>
<dbReference type="GO" id="GO:0005524">
    <property type="term" value="F:ATP binding"/>
    <property type="evidence" value="ECO:0007669"/>
    <property type="project" value="UniProtKB-UniRule"/>
</dbReference>
<dbReference type="GO" id="GO:0046872">
    <property type="term" value="F:metal ion binding"/>
    <property type="evidence" value="ECO:0007669"/>
    <property type="project" value="UniProtKB-KW"/>
</dbReference>
<dbReference type="GO" id="GO:0016730">
    <property type="term" value="F:oxidoreductase activity, acting on iron-sulfur proteins as donors"/>
    <property type="evidence" value="ECO:0007669"/>
    <property type="project" value="InterPro"/>
</dbReference>
<dbReference type="GO" id="GO:0016636">
    <property type="term" value="F:oxidoreductase activity, acting on the CH-CH group of donors, iron-sulfur protein as acceptor"/>
    <property type="evidence" value="ECO:0007669"/>
    <property type="project" value="UniProtKB-UniRule"/>
</dbReference>
<dbReference type="GO" id="GO:0036070">
    <property type="term" value="P:light-independent bacteriochlorophyll biosynthetic process"/>
    <property type="evidence" value="ECO:0007669"/>
    <property type="project" value="UniProtKB-UniRule"/>
</dbReference>
<dbReference type="GO" id="GO:0019685">
    <property type="term" value="P:photosynthesis, dark reaction"/>
    <property type="evidence" value="ECO:0007669"/>
    <property type="project" value="InterPro"/>
</dbReference>
<dbReference type="Gene3D" id="1.20.89.20">
    <property type="match status" value="1"/>
</dbReference>
<dbReference type="Gene3D" id="3.40.50.1980">
    <property type="entry name" value="Nitrogenase molybdenum iron protein domain"/>
    <property type="match status" value="3"/>
</dbReference>
<dbReference type="Gene3D" id="1.10.8.550">
    <property type="entry name" value="Proto-chlorophyllide reductase 57 kD subunit B"/>
    <property type="match status" value="1"/>
</dbReference>
<dbReference type="HAMAP" id="MF_00353">
    <property type="entry name" value="ChlB_BchB"/>
    <property type="match status" value="1"/>
</dbReference>
<dbReference type="InterPro" id="IPR050152">
    <property type="entry name" value="ChlB/BchB/BchZ"/>
</dbReference>
<dbReference type="InterPro" id="IPR013580">
    <property type="entry name" value="LI-POR_suB-like_C"/>
</dbReference>
<dbReference type="InterPro" id="IPR000510">
    <property type="entry name" value="Nase/OxRdtase_comp1"/>
</dbReference>
<dbReference type="InterPro" id="IPR042298">
    <property type="entry name" value="P-CP_red_C"/>
</dbReference>
<dbReference type="InterPro" id="IPR005969">
    <property type="entry name" value="Protochl_reductB"/>
</dbReference>
<dbReference type="InterPro" id="IPR016209">
    <property type="entry name" value="Protochlorophyllide_Rdtase"/>
</dbReference>
<dbReference type="NCBIfam" id="TIGR01278">
    <property type="entry name" value="DPOR_BchB"/>
    <property type="match status" value="1"/>
</dbReference>
<dbReference type="PANTHER" id="PTHR33712">
    <property type="entry name" value="LIGHT-INDEPENDENT PROTOCHLOROPHYLLIDE REDUCTASE SUBUNIT B"/>
    <property type="match status" value="1"/>
</dbReference>
<dbReference type="PANTHER" id="PTHR33712:SF7">
    <property type="entry name" value="LIGHT-INDEPENDENT PROTOCHLOROPHYLLIDE REDUCTASE SUBUNIT B"/>
    <property type="match status" value="1"/>
</dbReference>
<dbReference type="Pfam" id="PF00148">
    <property type="entry name" value="Oxidored_nitro"/>
    <property type="match status" value="1"/>
</dbReference>
<dbReference type="Pfam" id="PF08369">
    <property type="entry name" value="PCP_red"/>
    <property type="match status" value="1"/>
</dbReference>
<dbReference type="PIRSF" id="PIRSF000163">
    <property type="entry name" value="PCP_ChlB"/>
    <property type="match status" value="1"/>
</dbReference>
<dbReference type="SUPFAM" id="SSF53807">
    <property type="entry name" value="Helical backbone' metal receptor"/>
    <property type="match status" value="1"/>
</dbReference>